<proteinExistence type="inferred from homology"/>
<dbReference type="EMBL" id="JABWHU010001658">
    <property type="status" value="NOT_ANNOTATED_CDS"/>
    <property type="molecule type" value="Genomic_DNA"/>
</dbReference>
<dbReference type="SMR" id="P0DUI8"/>
<dbReference type="GO" id="GO:0042627">
    <property type="term" value="C:chylomicron"/>
    <property type="evidence" value="ECO:0007669"/>
    <property type="project" value="UniProtKB-KW"/>
</dbReference>
<dbReference type="GO" id="GO:0070062">
    <property type="term" value="C:extracellular exosome"/>
    <property type="evidence" value="ECO:0000250"/>
    <property type="project" value="UniProtKB"/>
</dbReference>
<dbReference type="GO" id="GO:0034364">
    <property type="term" value="C:high-density lipoprotein particle"/>
    <property type="evidence" value="ECO:0007669"/>
    <property type="project" value="UniProtKB-KW"/>
</dbReference>
<dbReference type="GO" id="GO:0034362">
    <property type="term" value="C:low-density lipoprotein particle"/>
    <property type="evidence" value="ECO:0007669"/>
    <property type="project" value="TreeGrafter"/>
</dbReference>
<dbReference type="GO" id="GO:0097487">
    <property type="term" value="C:multivesicular body, internal vesicle"/>
    <property type="evidence" value="ECO:0000250"/>
    <property type="project" value="UniProtKB"/>
</dbReference>
<dbReference type="GO" id="GO:0034361">
    <property type="term" value="C:very-low-density lipoprotein particle"/>
    <property type="evidence" value="ECO:0007669"/>
    <property type="project" value="UniProtKB-KW"/>
</dbReference>
<dbReference type="GO" id="GO:0120020">
    <property type="term" value="F:cholesterol transfer activity"/>
    <property type="evidence" value="ECO:0007669"/>
    <property type="project" value="TreeGrafter"/>
</dbReference>
<dbReference type="GO" id="GO:0008201">
    <property type="term" value="F:heparin binding"/>
    <property type="evidence" value="ECO:0007669"/>
    <property type="project" value="UniProtKB-KW"/>
</dbReference>
<dbReference type="GO" id="GO:0060228">
    <property type="term" value="F:phosphatidylcholine-sterol O-acyltransferase activator activity"/>
    <property type="evidence" value="ECO:0007669"/>
    <property type="project" value="TreeGrafter"/>
</dbReference>
<dbReference type="GO" id="GO:0005543">
    <property type="term" value="F:phospholipid binding"/>
    <property type="evidence" value="ECO:0007669"/>
    <property type="project" value="TreeGrafter"/>
</dbReference>
<dbReference type="GO" id="GO:0055090">
    <property type="term" value="P:acylglycerol homeostasis"/>
    <property type="evidence" value="ECO:0007669"/>
    <property type="project" value="TreeGrafter"/>
</dbReference>
<dbReference type="GO" id="GO:0033344">
    <property type="term" value="P:cholesterol efflux"/>
    <property type="evidence" value="ECO:0007669"/>
    <property type="project" value="TreeGrafter"/>
</dbReference>
<dbReference type="GO" id="GO:0008203">
    <property type="term" value="P:cholesterol metabolic process"/>
    <property type="evidence" value="ECO:0007669"/>
    <property type="project" value="TreeGrafter"/>
</dbReference>
<dbReference type="GO" id="GO:0042157">
    <property type="term" value="P:lipoprotein metabolic process"/>
    <property type="evidence" value="ECO:0007669"/>
    <property type="project" value="InterPro"/>
</dbReference>
<dbReference type="GO" id="GO:0032438">
    <property type="term" value="P:melanosome organization"/>
    <property type="evidence" value="ECO:0000250"/>
    <property type="project" value="UniProtKB"/>
</dbReference>
<dbReference type="GO" id="GO:0033700">
    <property type="term" value="P:phospholipid efflux"/>
    <property type="evidence" value="ECO:0007669"/>
    <property type="project" value="TreeGrafter"/>
</dbReference>
<dbReference type="FunFam" id="1.20.120.20:FF:000002">
    <property type="entry name" value="Apolipoprotein E"/>
    <property type="match status" value="1"/>
</dbReference>
<dbReference type="FunFam" id="1.20.120.20:FF:000003">
    <property type="entry name" value="Apolipoprotein E"/>
    <property type="match status" value="1"/>
</dbReference>
<dbReference type="Gene3D" id="1.20.120.20">
    <property type="entry name" value="Apolipoprotein"/>
    <property type="match status" value="2"/>
</dbReference>
<dbReference type="InterPro" id="IPR000074">
    <property type="entry name" value="ApoA_E"/>
</dbReference>
<dbReference type="InterPro" id="IPR050163">
    <property type="entry name" value="Apolipoprotein_A1/A4/E"/>
</dbReference>
<dbReference type="PANTHER" id="PTHR18976">
    <property type="entry name" value="APOLIPOPROTEIN"/>
    <property type="match status" value="1"/>
</dbReference>
<dbReference type="PANTHER" id="PTHR18976:SF2">
    <property type="entry name" value="APOLIPOPROTEIN E"/>
    <property type="match status" value="1"/>
</dbReference>
<dbReference type="Pfam" id="PF01442">
    <property type="entry name" value="Apolipoprotein"/>
    <property type="match status" value="1"/>
</dbReference>
<dbReference type="SUPFAM" id="SSF58113">
    <property type="entry name" value="Apolipoprotein A-I"/>
    <property type="match status" value="1"/>
</dbReference>
<reference key="1">
    <citation type="journal article" date="2020" name="Curr. Biol.">
        <title>Pre-extinction Demographic Stability and Genomic Signatures of Adaptation in the Woolly Rhinoceros.</title>
        <authorList>
            <person name="Lord E."/>
            <person name="Dussex N."/>
            <person name="Kierczak M."/>
            <person name="Diez-Del-Molino D."/>
            <person name="Ryder O.A."/>
            <person name="Stanton D.W.G."/>
            <person name="Gilbert M.T.P."/>
            <person name="Sanchez-Barreiro F."/>
            <person name="Zhang G."/>
            <person name="Sinding M.S."/>
            <person name="Lorenzen E.D."/>
            <person name="Willerslev E."/>
            <person name="Protopopov A."/>
            <person name="Shidlovskiy F."/>
            <person name="Fedorov S."/>
            <person name="Bocherens H."/>
            <person name="Nathan S.K.S.S."/>
            <person name="Goossens B."/>
            <person name="van der Plicht J."/>
            <person name="Chan Y.L."/>
            <person name="Prost S."/>
            <person name="Potapova O."/>
            <person name="Kirillova I."/>
            <person name="Lister A.M."/>
            <person name="Heintzman P.D."/>
            <person name="Kapp J.D."/>
            <person name="Shapiro B."/>
            <person name="Vartanyan S."/>
            <person name="Goetherstroem A."/>
            <person name="Dalen L."/>
        </authorList>
    </citation>
    <scope>NUCLEOTIDE SEQUENCE [LARGE SCALE GENOMIC DNA]</scope>
</reference>
<reference key="2">
    <citation type="unpublished observations" date="2021-01">
        <authorList>
            <person name="Puppione D.L."/>
        </authorList>
    </citation>
    <scope>IDENTIFICATION</scope>
</reference>
<organism>
    <name type="scientific">Dicerorhinus sumatrensis harrissoni</name>
    <name type="common">Bornean rhinoceros</name>
    <dbReference type="NCBI Taxonomy" id="310711"/>
    <lineage>
        <taxon>Eukaryota</taxon>
        <taxon>Metazoa</taxon>
        <taxon>Chordata</taxon>
        <taxon>Craniata</taxon>
        <taxon>Vertebrata</taxon>
        <taxon>Euteleostomi</taxon>
        <taxon>Mammalia</taxon>
        <taxon>Eutheria</taxon>
        <taxon>Laurasiatheria</taxon>
        <taxon>Perissodactyla</taxon>
        <taxon>Rhinocerotidae</taxon>
        <taxon>Dicerorhinus</taxon>
    </lineage>
</organism>
<evidence type="ECO:0000250" key="1">
    <source>
        <dbReference type="UniProtKB" id="P02649"/>
    </source>
</evidence>
<evidence type="ECO:0000255" key="2"/>
<evidence type="ECO:0000305" key="3"/>
<name>APOE_DICSH</name>
<accession>P0DUI8</accession>
<keyword id="KW-0162">Chylomicron</keyword>
<keyword id="KW-0967">Endosome</keyword>
<keyword id="KW-0272">Extracellular matrix</keyword>
<keyword id="KW-0325">Glycoprotein</keyword>
<keyword id="KW-0345">HDL</keyword>
<keyword id="KW-0358">Heparin-binding</keyword>
<keyword id="KW-0445">Lipid transport</keyword>
<keyword id="KW-0446">Lipid-binding</keyword>
<keyword id="KW-0558">Oxidation</keyword>
<keyword id="KW-0597">Phosphoprotein</keyword>
<keyword id="KW-0677">Repeat</keyword>
<keyword id="KW-0964">Secreted</keyword>
<keyword id="KW-0732">Signal</keyword>
<keyword id="KW-0813">Transport</keyword>
<keyword id="KW-0850">VLDL</keyword>
<gene>
    <name type="primary">APOE</name>
</gene>
<sequence>MKVLWPALVVTLLAGCRADVEPGPEVQLGKEWATWQASQPWEQALGRFWNYLRWVQTLSEQVQEELLSSQVTEELTALMDDTMKEVKACKSELEEQLGPVAEETKARVSKELQAAQARLGADMEEVRNRLAQYRGELQAMVGQSTEELRGRLNAHLRKLRKRLLRDAEDLQQRLAVYQAGIREGAERSVNTLREHLGPLAEQAATMHTLVSKPLQERAEAWAQRLRGRLEKAGFPVGDRLDEVREQVQEVRAKVEEQANQVRLQAEAFQGRLKSWFEPLVQDMQQKWAELVEKVQLALRAVPTSVPSEKQ</sequence>
<protein>
    <recommendedName>
        <fullName>Apolipoprotein E</fullName>
        <shortName>Apo-E</shortName>
    </recommendedName>
</protein>
<comment type="function">
    <text evidence="1">APOE is an apolipoprotein, a protein associating with lipid particles, that mainly functions in lipoprotein-mediated lipid transport between organs via the plasma and interstitial fluids. APOE is a core component of plasma lipoproteins and is involved in their production, conversion and clearance. Apolipoproteins are amphipathic molecules that interact both with lipids of the lipoprotein particle core and the aqueous environment of the plasma. As such, APOE associates with chylomicrons, chylomicron remnants, very low density lipoproteins (VLDL) and intermediate density lipoproteins (IDL) but shows a preferential binding to high-density lipoproteins (HDL). It also binds a wide range of cellular receptors including the LDL receptor/LDLR and the very low-density lipoprotein receptor/VLDLR that mediate the cellular uptake of the APOE-containing lipoprotein particles. Finally, APOE also has a heparin-binding activity and binds heparan-sulfate proteoglycans on the surface of cells, a property that supports the capture and the receptor-mediated uptake of APOE-containing lipoproteins by cells.</text>
</comment>
<comment type="subunit">
    <text evidence="1">Homotetramer. May interact with ABCA1; functionally associated with ABCA1 in the biogenesis of HDLs. May interact with APP/A4 amyloid-beta peptide; the interaction is extremely stable in vitro but its physiological significance is unclear. May interact with MAPT. May interact with MAP2. In the cerebrospinal fluid, interacts with secreted SORL1. Interacts with PMEL; this allows the loading of PMEL luminal fragment on ILVs to induce fibril nucleation.</text>
</comment>
<comment type="subcellular location">
    <subcellularLocation>
        <location evidence="1">Secreted</location>
    </subcellularLocation>
    <subcellularLocation>
        <location evidence="1">Secreted</location>
        <location evidence="1">Extracellular space</location>
    </subcellularLocation>
    <subcellularLocation>
        <location evidence="1">Secreted</location>
        <location evidence="1">Extracellular space</location>
        <location evidence="1">Extracellular matrix</location>
    </subcellularLocation>
    <subcellularLocation>
        <location evidence="1">Extracellular vesicle</location>
    </subcellularLocation>
    <subcellularLocation>
        <location evidence="1">Endosome</location>
        <location evidence="1">Multivesicular body</location>
    </subcellularLocation>
    <text evidence="1">In the plasma, APOE is associated with chylomicrons, chylomicrons remnants, VLDL, LDL and HDL lipoproteins. Lipid poor oligomeric APOE is associated with the extracellular matrix in a calcium- and heparan-sulfate proteoglycans-dependent manner. Lipidation induces the release from the extracellular matrix. Colocalizes with CD63 and PMEL at exosomes and in intraluminal vesicles within multivesicular endosomes.</text>
</comment>
<comment type="PTM">
    <text evidence="1">APOE exists as multiple glycosylated and sialylated glycoforms within cells and in plasma. The extent of glycosylation and sialylation are tissue and context specific.</text>
</comment>
<comment type="PTM">
    <text evidence="1">Glycated in plasma VLDL.</text>
</comment>
<comment type="PTM">
    <text evidence="1">Phosphorylated by FAM20C in the extracellular medium.</text>
</comment>
<comment type="similarity">
    <text evidence="3">Belongs to the apolipoprotein A1/A4/E family.</text>
</comment>
<feature type="signal peptide" evidence="2">
    <location>
        <begin position="1"/>
        <end position="18"/>
    </location>
</feature>
<feature type="chain" id="PRO_0000452453" description="Apolipoprotein E">
    <location>
        <begin position="19"/>
        <end position="310"/>
    </location>
</feature>
<feature type="repeat" description="1">
    <location>
        <begin position="77"/>
        <end position="98"/>
    </location>
</feature>
<feature type="repeat" description="2">
    <location>
        <begin position="99"/>
        <end position="120"/>
    </location>
</feature>
<feature type="repeat" description="3">
    <location>
        <begin position="121"/>
        <end position="142"/>
    </location>
</feature>
<feature type="repeat" description="4">
    <location>
        <begin position="143"/>
        <end position="164"/>
    </location>
</feature>
<feature type="repeat" description="5">
    <location>
        <begin position="165"/>
        <end position="186"/>
    </location>
</feature>
<feature type="repeat" description="6">
    <location>
        <begin position="187"/>
        <end position="208"/>
    </location>
</feature>
<feature type="repeat" description="7">
    <location>
        <begin position="209"/>
        <end position="226"/>
    </location>
</feature>
<feature type="repeat" description="8">
    <location>
        <begin position="227"/>
        <end position="248"/>
    </location>
</feature>
<feature type="region of interest" description="8 X 22 AA approximate tandem repeats">
    <location>
        <begin position="77"/>
        <end position="248"/>
    </location>
</feature>
<feature type="region of interest" description="LDL and other lipoprotein receptors binding" evidence="1">
    <location>
        <begin position="155"/>
        <end position="165"/>
    </location>
</feature>
<feature type="region of interest" description="Lipid-binding and lipoprotein association" evidence="1">
    <location>
        <begin position="207"/>
        <end position="283"/>
    </location>
</feature>
<feature type="region of interest" description="Homooligomerization" evidence="1">
    <location>
        <begin position="259"/>
        <end position="310"/>
    </location>
</feature>
<feature type="region of interest" description="Specificity for association with VLDL" evidence="1">
    <location>
        <begin position="271"/>
        <end position="283"/>
    </location>
</feature>
<feature type="binding site" evidence="1">
    <location>
        <begin position="159"/>
        <end position="162"/>
    </location>
    <ligand>
        <name>heparin</name>
        <dbReference type="ChEBI" id="CHEBI:28304"/>
    </ligand>
</feature>
<feature type="binding site" evidence="1">
    <location>
        <begin position="222"/>
        <end position="229"/>
    </location>
    <ligand>
        <name>heparin</name>
        <dbReference type="ChEBI" id="CHEBI:28304"/>
    </ligand>
</feature>